<keyword id="KW-0025">Alternative splicing</keyword>
<keyword id="KW-0963">Cytoplasm</keyword>
<keyword id="KW-0968">Cytoplasmic vesicle</keyword>
<keyword id="KW-0256">Endoplasmic reticulum</keyword>
<keyword id="KW-0931">ER-Golgi transport</keyword>
<keyword id="KW-0333">Golgi apparatus</keyword>
<keyword id="KW-0472">Membrane</keyword>
<keyword id="KW-0653">Protein transport</keyword>
<keyword id="KW-1185">Reference proteome</keyword>
<keyword id="KW-0677">Repeat</keyword>
<keyword id="KW-0813">Transport</keyword>
<reference evidence="17 18" key="1">
    <citation type="journal article" date="2000" name="FEBS Lett.">
        <title>Duplication of genes encoding non-clathrin coat protein gamma-COP in vertebrate, insect and plant evolution.</title>
        <authorList>
            <person name="Hahn Y."/>
            <person name="Lee Y.J."/>
            <person name="Yun J.H."/>
            <person name="Yang S.K."/>
            <person name="Park C.W."/>
            <person name="Mita K."/>
            <person name="Huh T.-L."/>
            <person name="Rhee M."/>
            <person name="Chung J.H."/>
        </authorList>
    </citation>
    <scope>NUCLEOTIDE SEQUENCE [MRNA] (ISOFORM A)</scope>
    <source>
        <strain evidence="7">Berkeley</strain>
        <tissue evidence="7">Larva</tissue>
        <tissue evidence="7">Pupae</tissue>
    </source>
</reference>
<reference evidence="19" key="2">
    <citation type="journal article" date="2000" name="Science">
        <title>The genome sequence of Drosophila melanogaster.</title>
        <authorList>
            <person name="Adams M.D."/>
            <person name="Celniker S.E."/>
            <person name="Holt R.A."/>
            <person name="Evans C.A."/>
            <person name="Gocayne J.D."/>
            <person name="Amanatides P.G."/>
            <person name="Scherer S.E."/>
            <person name="Li P.W."/>
            <person name="Hoskins R.A."/>
            <person name="Galle R.F."/>
            <person name="George R.A."/>
            <person name="Lewis S.E."/>
            <person name="Richards S."/>
            <person name="Ashburner M."/>
            <person name="Henderson S.N."/>
            <person name="Sutton G.G."/>
            <person name="Wortman J.R."/>
            <person name="Yandell M.D."/>
            <person name="Zhang Q."/>
            <person name="Chen L.X."/>
            <person name="Brandon R.C."/>
            <person name="Rogers Y.-H.C."/>
            <person name="Blazej R.G."/>
            <person name="Champe M."/>
            <person name="Pfeiffer B.D."/>
            <person name="Wan K.H."/>
            <person name="Doyle C."/>
            <person name="Baxter E.G."/>
            <person name="Helt G."/>
            <person name="Nelson C.R."/>
            <person name="Miklos G.L.G."/>
            <person name="Abril J.F."/>
            <person name="Agbayani A."/>
            <person name="An H.-J."/>
            <person name="Andrews-Pfannkoch C."/>
            <person name="Baldwin D."/>
            <person name="Ballew R.M."/>
            <person name="Basu A."/>
            <person name="Baxendale J."/>
            <person name="Bayraktaroglu L."/>
            <person name="Beasley E.M."/>
            <person name="Beeson K.Y."/>
            <person name="Benos P.V."/>
            <person name="Berman B.P."/>
            <person name="Bhandari D."/>
            <person name="Bolshakov S."/>
            <person name="Borkova D."/>
            <person name="Botchan M.R."/>
            <person name="Bouck J."/>
            <person name="Brokstein P."/>
            <person name="Brottier P."/>
            <person name="Burtis K.C."/>
            <person name="Busam D.A."/>
            <person name="Butler H."/>
            <person name="Cadieu E."/>
            <person name="Center A."/>
            <person name="Chandra I."/>
            <person name="Cherry J.M."/>
            <person name="Cawley S."/>
            <person name="Dahlke C."/>
            <person name="Davenport L.B."/>
            <person name="Davies P."/>
            <person name="de Pablos B."/>
            <person name="Delcher A."/>
            <person name="Deng Z."/>
            <person name="Mays A.D."/>
            <person name="Dew I."/>
            <person name="Dietz S.M."/>
            <person name="Dodson K."/>
            <person name="Doup L.E."/>
            <person name="Downes M."/>
            <person name="Dugan-Rocha S."/>
            <person name="Dunkov B.C."/>
            <person name="Dunn P."/>
            <person name="Durbin K.J."/>
            <person name="Evangelista C.C."/>
            <person name="Ferraz C."/>
            <person name="Ferriera S."/>
            <person name="Fleischmann W."/>
            <person name="Fosler C."/>
            <person name="Gabrielian A.E."/>
            <person name="Garg N.S."/>
            <person name="Gelbart W.M."/>
            <person name="Glasser K."/>
            <person name="Glodek A."/>
            <person name="Gong F."/>
            <person name="Gorrell J.H."/>
            <person name="Gu Z."/>
            <person name="Guan P."/>
            <person name="Harris M."/>
            <person name="Harris N.L."/>
            <person name="Harvey D.A."/>
            <person name="Heiman T.J."/>
            <person name="Hernandez J.R."/>
            <person name="Houck J."/>
            <person name="Hostin D."/>
            <person name="Houston K.A."/>
            <person name="Howland T.J."/>
            <person name="Wei M.-H."/>
            <person name="Ibegwam C."/>
            <person name="Jalali M."/>
            <person name="Kalush F."/>
            <person name="Karpen G.H."/>
            <person name="Ke Z."/>
            <person name="Kennison J.A."/>
            <person name="Ketchum K.A."/>
            <person name="Kimmel B.E."/>
            <person name="Kodira C.D."/>
            <person name="Kraft C.L."/>
            <person name="Kravitz S."/>
            <person name="Kulp D."/>
            <person name="Lai Z."/>
            <person name="Lasko P."/>
            <person name="Lei Y."/>
            <person name="Levitsky A.A."/>
            <person name="Li J.H."/>
            <person name="Li Z."/>
            <person name="Liang Y."/>
            <person name="Lin X."/>
            <person name="Liu X."/>
            <person name="Mattei B."/>
            <person name="McIntosh T.C."/>
            <person name="McLeod M.P."/>
            <person name="McPherson D."/>
            <person name="Merkulov G."/>
            <person name="Milshina N.V."/>
            <person name="Mobarry C."/>
            <person name="Morris J."/>
            <person name="Moshrefi A."/>
            <person name="Mount S.M."/>
            <person name="Moy M."/>
            <person name="Murphy B."/>
            <person name="Murphy L."/>
            <person name="Muzny D.M."/>
            <person name="Nelson D.L."/>
            <person name="Nelson D.R."/>
            <person name="Nelson K.A."/>
            <person name="Nixon K."/>
            <person name="Nusskern D.R."/>
            <person name="Pacleb J.M."/>
            <person name="Palazzolo M."/>
            <person name="Pittman G.S."/>
            <person name="Pan S."/>
            <person name="Pollard J."/>
            <person name="Puri V."/>
            <person name="Reese M.G."/>
            <person name="Reinert K."/>
            <person name="Remington K."/>
            <person name="Saunders R.D.C."/>
            <person name="Scheeler F."/>
            <person name="Shen H."/>
            <person name="Shue B.C."/>
            <person name="Siden-Kiamos I."/>
            <person name="Simpson M."/>
            <person name="Skupski M.P."/>
            <person name="Smith T.J."/>
            <person name="Spier E."/>
            <person name="Spradling A.C."/>
            <person name="Stapleton M."/>
            <person name="Strong R."/>
            <person name="Sun E."/>
            <person name="Svirskas R."/>
            <person name="Tector C."/>
            <person name="Turner R."/>
            <person name="Venter E."/>
            <person name="Wang A.H."/>
            <person name="Wang X."/>
            <person name="Wang Z.-Y."/>
            <person name="Wassarman D.A."/>
            <person name="Weinstock G.M."/>
            <person name="Weissenbach J."/>
            <person name="Williams S.M."/>
            <person name="Woodage T."/>
            <person name="Worley K.C."/>
            <person name="Wu D."/>
            <person name="Yang S."/>
            <person name="Yao Q.A."/>
            <person name="Ye J."/>
            <person name="Yeh R.-F."/>
            <person name="Zaveri J.S."/>
            <person name="Zhan M."/>
            <person name="Zhang G."/>
            <person name="Zhao Q."/>
            <person name="Zheng L."/>
            <person name="Zheng X.H."/>
            <person name="Zhong F.N."/>
            <person name="Zhong W."/>
            <person name="Zhou X."/>
            <person name="Zhu S.C."/>
            <person name="Zhu X."/>
            <person name="Smith H.O."/>
            <person name="Gibbs R.A."/>
            <person name="Myers E.W."/>
            <person name="Rubin G.M."/>
            <person name="Venter J.C."/>
        </authorList>
    </citation>
    <scope>NUCLEOTIDE SEQUENCE [LARGE SCALE GENOMIC DNA]</scope>
    <source>
        <strain evidence="6">Berkeley</strain>
    </source>
</reference>
<reference evidence="17 19" key="3">
    <citation type="journal article" date="2002" name="Genome Biol.">
        <title>Annotation of the Drosophila melanogaster euchromatic genome: a systematic review.</title>
        <authorList>
            <person name="Misra S."/>
            <person name="Crosby M.A."/>
            <person name="Mungall C.J."/>
            <person name="Matthews B.B."/>
            <person name="Campbell K.S."/>
            <person name="Hradecky P."/>
            <person name="Huang Y."/>
            <person name="Kaminker J.S."/>
            <person name="Millburn G.H."/>
            <person name="Prochnik S.E."/>
            <person name="Smith C.D."/>
            <person name="Tupy J.L."/>
            <person name="Whitfield E.J."/>
            <person name="Bayraktaroglu L."/>
            <person name="Berman B.P."/>
            <person name="Bettencourt B.R."/>
            <person name="Celniker S.E."/>
            <person name="de Grey A.D.N.J."/>
            <person name="Drysdale R.A."/>
            <person name="Harris N.L."/>
            <person name="Richter J."/>
            <person name="Russo S."/>
            <person name="Schroeder A.J."/>
            <person name="Shu S.Q."/>
            <person name="Stapleton M."/>
            <person name="Yamada C."/>
            <person name="Ashburner M."/>
            <person name="Gelbart W.M."/>
            <person name="Rubin G.M."/>
            <person name="Lewis S.E."/>
        </authorList>
    </citation>
    <scope>GENOME REANNOTATION</scope>
    <source>
        <strain>Berkeley</strain>
    </source>
</reference>
<reference evidence="17 20" key="4">
    <citation type="journal article" date="2002" name="Genome Biol.">
        <title>A Drosophila full-length cDNA resource.</title>
        <authorList>
            <person name="Stapleton M."/>
            <person name="Carlson J.W."/>
            <person name="Brokstein P."/>
            <person name="Yu C."/>
            <person name="Champe M."/>
            <person name="George R.A."/>
            <person name="Guarin H."/>
            <person name="Kronmiller B."/>
            <person name="Pacleb J.M."/>
            <person name="Park S."/>
            <person name="Wan K.H."/>
            <person name="Rubin G.M."/>
            <person name="Celniker S.E."/>
        </authorList>
    </citation>
    <scope>NUCLEOTIDE SEQUENCE [LARGE SCALE MRNA] (ISOFORMS B AND C)</scope>
    <source>
        <strain evidence="8">Berkeley</strain>
        <tissue evidence="8">Embryo</tissue>
    </source>
</reference>
<reference evidence="17" key="5">
    <citation type="journal article" date="2005" name="Gene Expr. Patterns">
        <title>Expression of COPI components during development of Drosophila melanogaster.</title>
        <authorList>
            <person name="Grieder N.C."/>
            <person name="Kloter U."/>
            <person name="Gehring W.J."/>
        </authorList>
    </citation>
    <scope>TISSUE SPECIFICITY</scope>
    <scope>DEVELOPMENTAL STAGE</scope>
</reference>
<reference evidence="17" key="6">
    <citation type="journal article" date="2008" name="PLoS Biol.">
        <title>COPI complex is a regulator of lipid homeostasis.</title>
        <authorList>
            <person name="Beller M."/>
            <person name="Sztalryd C."/>
            <person name="Southall N."/>
            <person name="Bell M."/>
            <person name="Jackle H."/>
            <person name="Auld D.S."/>
            <person name="Oliver B."/>
        </authorList>
    </citation>
    <scope>FUNCTION</scope>
</reference>
<reference evidence="17" key="7">
    <citation type="journal article" date="2008" name="PLoS ONE">
        <title>COPI vesicle transport is a common requirement for tube expansion in Drosophila.</title>
        <authorList>
            <person name="Jayaram S.A."/>
            <person name="Senti K.A."/>
            <person name="Tiklova K."/>
            <person name="Tsarouhas V."/>
            <person name="Hemphala J."/>
            <person name="Samakovlis C."/>
        </authorList>
    </citation>
    <scope>FUNCTION</scope>
    <scope>SUBCELLULAR LOCATION</scope>
    <scope>DEVELOPMENTAL STAGE</scope>
    <scope>DISRUPTION PHENOTYPE</scope>
</reference>
<reference evidence="17" key="8">
    <citation type="journal article" date="2008" name="PLoS ONE">
        <title>gammaCOP is required for apical protein secretion and epithelial morphogenesis in Drosophila melanogaster.</title>
        <authorList>
            <person name="Grieder N.C."/>
            <person name="Caussinus E."/>
            <person name="Parker D.S."/>
            <person name="Cadigan K."/>
            <person name="Affolter M."/>
            <person name="Luschnig S."/>
        </authorList>
    </citation>
    <scope>FUNCTION</scope>
    <scope>SUBCELLULAR LOCATION</scope>
    <scope>DISRUPTION PHENOTYPE</scope>
</reference>
<reference key="9">
    <citation type="journal article" date="2023" name="Nature">
        <title>A phosphate-sensing organelle regulates phosphate and tissue homeostasis.</title>
        <authorList>
            <person name="Xu C."/>
            <person name="Xu J."/>
            <person name="Tang H.W."/>
            <person name="Ericsson M."/>
            <person name="Weng J.H."/>
            <person name="DiRusso J."/>
            <person name="Hu Y."/>
            <person name="Ma W."/>
            <person name="Asara J.M."/>
            <person name="Perrimon N."/>
        </authorList>
    </citation>
    <scope>DISRUPTION PHENOTYPE</scope>
</reference>
<organism>
    <name type="scientific">Drosophila melanogaster</name>
    <name type="common">Fruit fly</name>
    <dbReference type="NCBI Taxonomy" id="7227"/>
    <lineage>
        <taxon>Eukaryota</taxon>
        <taxon>Metazoa</taxon>
        <taxon>Ecdysozoa</taxon>
        <taxon>Arthropoda</taxon>
        <taxon>Hexapoda</taxon>
        <taxon>Insecta</taxon>
        <taxon>Pterygota</taxon>
        <taxon>Neoptera</taxon>
        <taxon>Endopterygota</taxon>
        <taxon>Diptera</taxon>
        <taxon>Brachycera</taxon>
        <taxon>Muscomorpha</taxon>
        <taxon>Ephydroidea</taxon>
        <taxon>Drosophilidae</taxon>
        <taxon>Drosophila</taxon>
        <taxon>Sophophora</taxon>
    </lineage>
</organism>
<name>COPG_DROME</name>
<comment type="function">
    <text evidence="10 11 12">The coatomer is a cytosolic protein complex that binds to dilysine motifs and reversibly associates with Golgi non-clathrin-coated vesicles, which further mediate biosynthetic protein transport from the ER, via the Golgi up to the trans Golgi network. Coatomer complex is required for budding from Golgi membranes, and is essential for the retrograde Golgi-to-ER transport of dilysine-tagged proteins. Required for limiting lipid storage in lipid droplets. Involved in the expansion of luminal extracellular matrices and apical membrane during tubulogenesis. Required in the tracheal epithelium for luminal protein secretion and diametric tube growth. In salivary glands, required for deposition of O-glycans and luminal extracellular matrix assembly. Required for epidermal morphogenesis and cuticle development.</text>
</comment>
<comment type="subunit">
    <text evidence="1 2 3">Oligomeric complex that consists of at least the alpha, beta, beta', gamma, delta, epsilon and zeta subunits.</text>
</comment>
<comment type="subcellular location">
    <subcellularLocation>
        <location evidence="1 2 3">Cytoplasm</location>
    </subcellularLocation>
    <subcellularLocation>
        <location evidence="10 11">Golgi apparatus membrane</location>
        <topology evidence="10 11">Peripheral membrane protein</topology>
        <orientation evidence="10 11">Cytoplasmic side</orientation>
    </subcellularLocation>
    <subcellularLocation>
        <location evidence="10 11">Cytoplasmic vesicle</location>
        <location evidence="10 11">COPI-coated vesicle membrane</location>
        <topology evidence="10 11">Peripheral membrane protein</topology>
        <orientation evidence="10 11">Cytoplasmic side</orientation>
    </subcellularLocation>
    <subcellularLocation>
        <location evidence="10 11">Endoplasmic reticulum</location>
    </subcellularLocation>
    <text evidence="1 2 3 10 11">The coatomer is cytoplasmic or polymerized on the cytoplasmic side of the Golgi, as well as on the vesicles/buds originating from it.</text>
</comment>
<comment type="alternative products">
    <event type="alternative splicing"/>
    <isoform>
        <id>Q8I0G5-1</id>
        <name evidence="6 8">B</name>
        <sequence type="displayed"/>
    </isoform>
    <isoform>
        <id>Q8I0G5-2</id>
        <name evidence="6 7">A</name>
        <sequence type="described" ref="VSP_040672"/>
    </isoform>
    <isoform>
        <id>Q8I0G5-3</id>
        <name evidence="6 8">C</name>
        <sequence type="described" ref="VSP_040672 VSP_040673"/>
    </isoform>
</comment>
<comment type="tissue specificity">
    <text evidence="9">Expressed in ovary, testis, testis tip, young spermatocytes, germ cells and follicle cells. Up-regulated expression within centrally to posteriorly located germarial cysts and in migrating follicle cells. Widespread expression in imaginal disks including eye-antennal disk, wing disk, third leg and haltere disk.</text>
</comment>
<comment type="developmental stage">
    <text evidence="9 10">Expressed during spermatogenesis and at later stages of oogenesis. During embryonic and larval development, expressed ubiquitously. Starting at stage 10 embryos and lasting until the end of embryonic development, strongly expressed in the salivary glands and in cells of the presumptive proventriculus. Maternal expression abundant in early embryos. Zygotic expression commences in the epidermis and salivary glands from stage 11, initiates in the trachea at stage 13, and at early stage 15 is also detected in the foregut and hindgut tubes.</text>
</comment>
<comment type="disruption phenotype">
    <text evidence="10 11 13">Narrow tracheal tubes and thin salivary glands with reduced tube diameter and impaired tube elongation (PubMed:18398480). Fails to complete dorsal closure (PubMed:18398480). Fails to efficiently secrete luminal components and assemble the luminal chitinous matrix during tracheal tube expansion (PubMed:18398480). In salivary glands, fails in the luminal deposition and assembly of a distinct, transient intraluminal matrix (PubMed:18398480). Disrupted endoplasmic reticulum and Golgi in embryos (PubMed:18398480). Null mutants die late in embryogenesis with a poorly differentiated cuticle and denticle (PubMed:18802472). Defects in cell rearrangements, in branch elongation, in tube dilation and tube fusion (PubMed:18802472). In midgut enterocytes, RNAi-mediated knockdown decreases the number of PXo bodies which are distinct organelles that function as intracellular stores of inorganic phosphate (PubMed:37138087).</text>
</comment>
<comment type="similarity">
    <text evidence="4">Belongs to the COPG family.</text>
</comment>
<sequence>MNYFSLTSHKKHRGHPSAGPSNAYQNLEKTSVLQETRTFNETPVNPRKCIHILTKILYLINQGEQLVAREATDCFFAMTKLFQSKDVVLRRMVYLGIKELSSIAEDVIIVTSSLTKDMTGKEDLYRAAAIRALCSITDNTMLQAVERYMKQCIVDKNAAVSCAALVSSLRLANTAGDVVKRWANEAQEALNSDNIMVQYHALGLLYHIRKSDRLAVSKLVNKLTRGSLKSPYAVCMLIRIACKLIEEEDIPSEELSDSPLFTFIESCLRHKSEMVIYEAAHAIVNLKNTNPRMLSPAFSILQLFCSSPKATLRFAAVRTLNKVAMTHPAAVTTCNLDLEGLITDSNRSVATLAITTLLKTGAESSVERLMKQISTFVAEISDEFKVVVVQAICALCTKYPRKHTVLMNFLSGMLREEGGLEYKTSIVDTIITIIEENADAKESGLSHLCEFIEDCEHVSLAVRILHLLGKEGPFAATPSKYIRFIYNRVILESPIVRAAAVTAMAQFGASCPALLSNILVLLGRCQMDPDDEVRDRATYYLSILNSERPELYKNYIIERENCSLALLEKSLVEHLNGDVDTRFDISIVPKAAIVKPVIANDVMLVTSSAPRPPKITREEESAARLAQLPGIQVLGPIHRSTAPIQLTESETEYTVQCIKHIFGQHVVFQFDCLNTLSDQILENVRVELTLPEGFTTRAVIPCPKLPYNDLQTTFVIVEFPPDAANSIATFGATLRFVVKDCDPNTGEPESEEGYDDEYMLEDLELTVADQIQKTRKNNFQVSWDAADSEEWLQAEDTFVLSAVTTLQDAVNTIVKILGLGAANLSENVPEGTHLHTLLCSGTFRGGAEILVRAKLALSEGVTLNLTVRSTDQDVAELITAAIG</sequence>
<accession>Q8I0G5</accession>
<accession>E1JJ29</accession>
<accession>Q8MYW4</accession>
<accession>Q9U677</accession>
<accession>Q9V9W9</accession>
<gene>
    <name evidence="21" type="primary">gammaCOP</name>
    <name evidence="18" type="synonym">copg</name>
    <name type="synonym">gamma-Cop</name>
    <name evidence="21" type="ORF">CG1528</name>
</gene>
<protein>
    <recommendedName>
        <fullName evidence="2 19">Coatomer subunit gamma</fullName>
    </recommendedName>
    <alternativeName>
        <fullName evidence="2">Gamma-coat protein</fullName>
        <shortName evidence="2">Gamma-COP</shortName>
    </alternativeName>
</protein>
<proteinExistence type="evidence at transcript level"/>
<evidence type="ECO:0000250" key="1">
    <source>
        <dbReference type="UniProtKB" id="P32074"/>
    </source>
</evidence>
<evidence type="ECO:0000250" key="2">
    <source>
        <dbReference type="UniProtKB" id="P53620"/>
    </source>
</evidence>
<evidence type="ECO:0000250" key="3">
    <source>
        <dbReference type="UniProtKB" id="P53622"/>
    </source>
</evidence>
<evidence type="ECO:0000255" key="4"/>
<evidence type="ECO:0000256" key="5">
    <source>
        <dbReference type="SAM" id="MobiDB-lite"/>
    </source>
</evidence>
<evidence type="ECO:0000269" key="6">
    <source>
    </source>
</evidence>
<evidence type="ECO:0000269" key="7">
    <source>
    </source>
</evidence>
<evidence type="ECO:0000269" key="8">
    <source>
    </source>
</evidence>
<evidence type="ECO:0000269" key="9">
    <source>
    </source>
</evidence>
<evidence type="ECO:0000269" key="10">
    <source>
    </source>
</evidence>
<evidence type="ECO:0000269" key="11">
    <source>
    </source>
</evidence>
<evidence type="ECO:0000269" key="12">
    <source>
    </source>
</evidence>
<evidence type="ECO:0000269" key="13">
    <source>
    </source>
</evidence>
<evidence type="ECO:0000303" key="14">
    <source>
    </source>
</evidence>
<evidence type="ECO:0000303" key="15">
    <source>
    </source>
</evidence>
<evidence type="ECO:0000303" key="16">
    <source>
    </source>
</evidence>
<evidence type="ECO:0000305" key="17"/>
<evidence type="ECO:0000312" key="18">
    <source>
        <dbReference type="EMBL" id="AAF05719.1"/>
    </source>
</evidence>
<evidence type="ECO:0000312" key="19">
    <source>
        <dbReference type="EMBL" id="AAN14275.1"/>
    </source>
</evidence>
<evidence type="ECO:0000312" key="20">
    <source>
        <dbReference type="EMBL" id="AAN71383.1"/>
    </source>
</evidence>
<evidence type="ECO:0000312" key="21">
    <source>
        <dbReference type="FlyBase" id="FBgn0028968"/>
    </source>
</evidence>
<dbReference type="EMBL" id="AF191563">
    <property type="protein sequence ID" value="AAF05719.1"/>
    <property type="molecule type" value="mRNA"/>
</dbReference>
<dbReference type="EMBL" id="AE014297">
    <property type="protein sequence ID" value="AAN14275.1"/>
    <property type="molecule type" value="Genomic_DNA"/>
</dbReference>
<dbReference type="EMBL" id="AE014297">
    <property type="protein sequence ID" value="AAF57160.1"/>
    <property type="molecule type" value="Genomic_DNA"/>
</dbReference>
<dbReference type="EMBL" id="AE014297">
    <property type="protein sequence ID" value="ACZ95077.1"/>
    <property type="molecule type" value="Genomic_DNA"/>
</dbReference>
<dbReference type="EMBL" id="AY113545">
    <property type="protein sequence ID" value="AAM29550.1"/>
    <property type="molecule type" value="mRNA"/>
</dbReference>
<dbReference type="EMBL" id="BT001628">
    <property type="protein sequence ID" value="AAN71383.1"/>
    <property type="molecule type" value="mRNA"/>
</dbReference>
<dbReference type="RefSeq" id="NP_001163784.1">
    <molecule id="Q8I0G5-3"/>
    <property type="nucleotide sequence ID" value="NM_001170313.1"/>
</dbReference>
<dbReference type="RefSeq" id="NP_524608.1">
    <molecule id="Q8I0G5-2"/>
    <property type="nucleotide sequence ID" value="NM_079869.3"/>
</dbReference>
<dbReference type="RefSeq" id="NP_733432.1">
    <molecule id="Q8I0G5-1"/>
    <property type="nucleotide sequence ID" value="NM_170553.2"/>
</dbReference>
<dbReference type="SMR" id="Q8I0G5"/>
<dbReference type="BioGRID" id="68560">
    <property type="interactions" value="7"/>
</dbReference>
<dbReference type="ComplexPortal" id="CPX-2820">
    <property type="entry name" value="COPI vesicle coat complex"/>
</dbReference>
<dbReference type="FunCoup" id="Q8I0G5">
    <property type="interactions" value="2259"/>
</dbReference>
<dbReference type="IntAct" id="Q8I0G5">
    <property type="interactions" value="27"/>
</dbReference>
<dbReference type="STRING" id="7227.FBpp0303129"/>
<dbReference type="GlyGen" id="Q8I0G5">
    <property type="glycosylation" value="1 site"/>
</dbReference>
<dbReference type="PaxDb" id="7227-FBpp0085155"/>
<dbReference type="EnsemblMetazoa" id="FBtr0085793">
    <molecule id="Q8I0G5-2"/>
    <property type="protein sequence ID" value="FBpp0085154"/>
    <property type="gene ID" value="FBgn0028968"/>
</dbReference>
<dbReference type="EnsemblMetazoa" id="FBtr0085794">
    <molecule id="Q8I0G5-1"/>
    <property type="protein sequence ID" value="FBpp0085155"/>
    <property type="gene ID" value="FBgn0028968"/>
</dbReference>
<dbReference type="EnsemblMetazoa" id="FBtr0301290">
    <molecule id="Q8I0G5-3"/>
    <property type="protein sequence ID" value="FBpp0290505"/>
    <property type="gene ID" value="FBgn0028968"/>
</dbReference>
<dbReference type="GeneID" id="43717"/>
<dbReference type="KEGG" id="dme:Dmel_CG1528"/>
<dbReference type="UCSC" id="CG1528-RA">
    <property type="organism name" value="d. melanogaster"/>
</dbReference>
<dbReference type="UCSC" id="CG1528-RB">
    <molecule id="Q8I0G5-1"/>
    <property type="organism name" value="d. melanogaster"/>
</dbReference>
<dbReference type="AGR" id="FB:FBgn0028968"/>
<dbReference type="CTD" id="43717"/>
<dbReference type="FlyBase" id="FBgn0028968">
    <property type="gene designation" value="gammaCOP"/>
</dbReference>
<dbReference type="VEuPathDB" id="VectorBase:FBgn0028968"/>
<dbReference type="eggNOG" id="KOG1078">
    <property type="taxonomic scope" value="Eukaryota"/>
</dbReference>
<dbReference type="GeneTree" id="ENSGT00390000016313"/>
<dbReference type="InParanoid" id="Q8I0G5"/>
<dbReference type="OMA" id="DFIEDCE"/>
<dbReference type="OrthoDB" id="1074925at2759"/>
<dbReference type="PhylomeDB" id="Q8I0G5"/>
<dbReference type="Reactome" id="R-DME-6807878">
    <property type="pathway name" value="COPI-mediated anterograde transport"/>
</dbReference>
<dbReference type="Reactome" id="R-DME-6811434">
    <property type="pathway name" value="COPI-dependent Golgi-to-ER retrograde traffic"/>
</dbReference>
<dbReference type="BioGRID-ORCS" id="43717">
    <property type="hits" value="1 hit in 3 CRISPR screens"/>
</dbReference>
<dbReference type="GenomeRNAi" id="43717"/>
<dbReference type="PRO" id="PR:Q8I0G5"/>
<dbReference type="Proteomes" id="UP000000803">
    <property type="component" value="Chromosome 3R"/>
</dbReference>
<dbReference type="Bgee" id="FBgn0028968">
    <property type="expression patterns" value="Expressed in spermathecum and 148 other cell types or tissues"/>
</dbReference>
<dbReference type="ExpressionAtlas" id="Q8I0G5">
    <property type="expression patterns" value="baseline and differential"/>
</dbReference>
<dbReference type="GO" id="GO:0036063">
    <property type="term" value="C:acroblast"/>
    <property type="evidence" value="ECO:0000314"/>
    <property type="project" value="FlyBase"/>
</dbReference>
<dbReference type="GO" id="GO:0005801">
    <property type="term" value="C:cis-Golgi network"/>
    <property type="evidence" value="ECO:0000314"/>
    <property type="project" value="FlyBase"/>
</dbReference>
<dbReference type="GO" id="GO:0030126">
    <property type="term" value="C:COPI vesicle coat"/>
    <property type="evidence" value="ECO:0000318"/>
    <property type="project" value="GO_Central"/>
</dbReference>
<dbReference type="GO" id="GO:0005783">
    <property type="term" value="C:endoplasmic reticulum"/>
    <property type="evidence" value="ECO:0000314"/>
    <property type="project" value="FlyBase"/>
</dbReference>
<dbReference type="GO" id="GO:0005793">
    <property type="term" value="C:endoplasmic reticulum-Golgi intermediate compartment"/>
    <property type="evidence" value="ECO:0000314"/>
    <property type="project" value="FlyBase"/>
</dbReference>
<dbReference type="GO" id="GO:0005794">
    <property type="term" value="C:Golgi apparatus"/>
    <property type="evidence" value="ECO:0000314"/>
    <property type="project" value="FlyBase"/>
</dbReference>
<dbReference type="GO" id="GO:0000139">
    <property type="term" value="C:Golgi membrane"/>
    <property type="evidence" value="ECO:0000318"/>
    <property type="project" value="GO_Central"/>
</dbReference>
<dbReference type="GO" id="GO:0005198">
    <property type="term" value="F:structural molecule activity"/>
    <property type="evidence" value="ECO:0007669"/>
    <property type="project" value="InterPro"/>
</dbReference>
<dbReference type="GO" id="GO:0035147">
    <property type="term" value="P:branch fusion, open tracheal system"/>
    <property type="evidence" value="ECO:0000315"/>
    <property type="project" value="FlyBase"/>
</dbReference>
<dbReference type="GO" id="GO:0008362">
    <property type="term" value="P:chitin-based embryonic cuticle biosynthetic process"/>
    <property type="evidence" value="ECO:0000315"/>
    <property type="project" value="FlyBase"/>
</dbReference>
<dbReference type="GO" id="GO:0006888">
    <property type="term" value="P:endoplasmic reticulum to Golgi vesicle-mediated transport"/>
    <property type="evidence" value="ECO:0000318"/>
    <property type="project" value="GO_Central"/>
</dbReference>
<dbReference type="GO" id="GO:0030198">
    <property type="term" value="P:extracellular matrix organization"/>
    <property type="evidence" value="ECO:0000315"/>
    <property type="project" value="FlyBase"/>
</dbReference>
<dbReference type="GO" id="GO:0006891">
    <property type="term" value="P:intra-Golgi vesicle-mediated transport"/>
    <property type="evidence" value="ECO:0000318"/>
    <property type="project" value="GO_Central"/>
</dbReference>
<dbReference type="GO" id="GO:0006886">
    <property type="term" value="P:intracellular protein transport"/>
    <property type="evidence" value="ECO:0007669"/>
    <property type="project" value="InterPro"/>
</dbReference>
<dbReference type="GO" id="GO:0007436">
    <property type="term" value="P:larval salivary gland morphogenesis"/>
    <property type="evidence" value="ECO:0000315"/>
    <property type="project" value="FlyBase"/>
</dbReference>
<dbReference type="GO" id="GO:0035149">
    <property type="term" value="P:lumen formation, open tracheal system"/>
    <property type="evidence" value="ECO:0000315"/>
    <property type="project" value="FlyBase"/>
</dbReference>
<dbReference type="GO" id="GO:0007112">
    <property type="term" value="P:male meiosis cytokinesis"/>
    <property type="evidence" value="ECO:0000315"/>
    <property type="project" value="FlyBase"/>
</dbReference>
<dbReference type="GO" id="GO:0007424">
    <property type="term" value="P:open tracheal system development"/>
    <property type="evidence" value="ECO:0000315"/>
    <property type="project" value="FlyBase"/>
</dbReference>
<dbReference type="GO" id="GO:0072384">
    <property type="term" value="P:organelle transport along microtubule"/>
    <property type="evidence" value="ECO:0000318"/>
    <property type="project" value="GO_Central"/>
</dbReference>
<dbReference type="GO" id="GO:0009306">
    <property type="term" value="P:protein secretion"/>
    <property type="evidence" value="ECO:0000315"/>
    <property type="project" value="FlyBase"/>
</dbReference>
<dbReference type="GO" id="GO:0010883">
    <property type="term" value="P:regulation of lipid storage"/>
    <property type="evidence" value="ECO:0000314"/>
    <property type="project" value="FlyBase"/>
</dbReference>
<dbReference type="GO" id="GO:0035158">
    <property type="term" value="P:regulation of tube diameter, open tracheal system"/>
    <property type="evidence" value="ECO:0000315"/>
    <property type="project" value="FlyBase"/>
</dbReference>
<dbReference type="FunFam" id="1.25.10.10:FF:000038">
    <property type="entry name" value="Coatomer subunit gamma"/>
    <property type="match status" value="1"/>
</dbReference>
<dbReference type="FunFam" id="1.25.10.10:FF:000071">
    <property type="entry name" value="Coatomer subunit gamma"/>
    <property type="match status" value="1"/>
</dbReference>
<dbReference type="FunFam" id="2.60.40.1480:FF:000001">
    <property type="entry name" value="Coatomer subunit gamma"/>
    <property type="match status" value="1"/>
</dbReference>
<dbReference type="FunFam" id="3.30.310.10:FF:000011">
    <property type="entry name" value="Coatomer subunit gamma"/>
    <property type="match status" value="1"/>
</dbReference>
<dbReference type="Gene3D" id="2.60.40.1480">
    <property type="entry name" value="Coatomer, gamma subunit, appendage domain"/>
    <property type="match status" value="1"/>
</dbReference>
<dbReference type="Gene3D" id="1.25.10.10">
    <property type="entry name" value="Leucine-rich Repeat Variant"/>
    <property type="match status" value="2"/>
</dbReference>
<dbReference type="Gene3D" id="3.30.310.10">
    <property type="entry name" value="TATA-Binding Protein"/>
    <property type="match status" value="1"/>
</dbReference>
<dbReference type="InterPro" id="IPR011989">
    <property type="entry name" value="ARM-like"/>
</dbReference>
<dbReference type="InterPro" id="IPR016024">
    <property type="entry name" value="ARM-type_fold"/>
</dbReference>
<dbReference type="InterPro" id="IPR002553">
    <property type="entry name" value="Clathrin/coatomer_adapt-like_N"/>
</dbReference>
<dbReference type="InterPro" id="IPR013041">
    <property type="entry name" value="Clathrin_app_Ig-like_sf"/>
</dbReference>
<dbReference type="InterPro" id="IPR009028">
    <property type="entry name" value="Coatomer/calthrin_app_sub_C"/>
</dbReference>
<dbReference type="InterPro" id="IPR032154">
    <property type="entry name" value="Coatomer_g_Cpla"/>
</dbReference>
<dbReference type="InterPro" id="IPR017106">
    <property type="entry name" value="Coatomer_gsu"/>
</dbReference>
<dbReference type="InterPro" id="IPR013040">
    <property type="entry name" value="Coatomer_gsu_app_Ig-like_dom"/>
</dbReference>
<dbReference type="InterPro" id="IPR037067">
    <property type="entry name" value="Coatomer_gsu_app_sf"/>
</dbReference>
<dbReference type="InterPro" id="IPR012295">
    <property type="entry name" value="TBP_dom_sf"/>
</dbReference>
<dbReference type="PANTHER" id="PTHR10261">
    <property type="entry name" value="COATOMER SUBUNIT GAMMA"/>
    <property type="match status" value="1"/>
</dbReference>
<dbReference type="PANTHER" id="PTHR10261:SF0">
    <property type="entry name" value="COATOMER SUBUNIT GAMMA-2"/>
    <property type="match status" value="1"/>
</dbReference>
<dbReference type="Pfam" id="PF01602">
    <property type="entry name" value="Adaptin_N"/>
    <property type="match status" value="1"/>
</dbReference>
<dbReference type="Pfam" id="PF16381">
    <property type="entry name" value="Coatomer_g_Cpla"/>
    <property type="match status" value="1"/>
</dbReference>
<dbReference type="Pfam" id="PF08752">
    <property type="entry name" value="COP-gamma_platf"/>
    <property type="match status" value="1"/>
</dbReference>
<dbReference type="PIRSF" id="PIRSF037093">
    <property type="entry name" value="Coatomer_gamma_subunit"/>
    <property type="match status" value="1"/>
</dbReference>
<dbReference type="SUPFAM" id="SSF48371">
    <property type="entry name" value="ARM repeat"/>
    <property type="match status" value="1"/>
</dbReference>
<dbReference type="SUPFAM" id="SSF49348">
    <property type="entry name" value="Clathrin adaptor appendage domain"/>
    <property type="match status" value="1"/>
</dbReference>
<dbReference type="SUPFAM" id="SSF55711">
    <property type="entry name" value="Subdomain of clathrin and coatomer appendage domain"/>
    <property type="match status" value="1"/>
</dbReference>
<feature type="chain" id="PRO_0000405327" description="Coatomer subunit gamma">
    <location>
        <begin position="1"/>
        <end position="883"/>
    </location>
</feature>
<feature type="repeat" description="HEAT 1">
    <location>
        <begin position="69"/>
        <end position="106"/>
    </location>
</feature>
<feature type="repeat" description="HEAT 2">
    <location>
        <begin position="292"/>
        <end position="329"/>
    </location>
</feature>
<feature type="repeat" description="HEAT 3">
    <location>
        <begin position="331"/>
        <end position="364"/>
    </location>
</feature>
<feature type="repeat" description="HEAT 4">
    <location>
        <begin position="365"/>
        <end position="401"/>
    </location>
</feature>
<feature type="repeat" description="HEAT 5">
    <location>
        <begin position="404"/>
        <end position="439"/>
    </location>
</feature>
<feature type="repeat" description="HEAT 6">
    <location>
        <begin position="476"/>
        <end position="513"/>
    </location>
</feature>
<feature type="region of interest" description="Disordered" evidence="5">
    <location>
        <begin position="1"/>
        <end position="25"/>
    </location>
</feature>
<feature type="splice variant" id="VSP_040672" description="In isoform A and isoform C." evidence="14 15 16">
    <original>NYFSLTSHKKHRGHPS</original>
    <variation>GSFRREKDDEED</variation>
    <location>
        <begin position="2"/>
        <end position="17"/>
    </location>
</feature>
<feature type="splice variant" id="VSP_040673" description="In isoform C." evidence="14 16">
    <location>
        <position position="18"/>
    </location>
</feature>
<feature type="sequence conflict" description="In Ref. 1; AAF05719." evidence="17" ref="1">
    <original>A</original>
    <variation>V</variation>
    <location>
        <position position="280"/>
    </location>
</feature>
<feature type="sequence conflict" description="In Ref. 4; AAM29550." evidence="17" ref="4">
    <original>S</original>
    <variation>W</variation>
    <location>
        <position position="546"/>
    </location>
</feature>
<feature type="sequence conflict" description="In Ref. 4; AAM29550." evidence="17" ref="4">
    <original>A</original>
    <variation>T</variation>
    <location>
        <position position="724"/>
    </location>
</feature>
<feature type="sequence conflict" description="In Ref. 4; AAM29550." evidence="17" ref="4">
    <original>T</original>
    <variation>A</variation>
    <location>
        <position position="729"/>
    </location>
</feature>
<feature type="sequence conflict" description="In Ref. 4; AAM29550." evidence="17" ref="4">
    <original>I</original>
    <variation>V</variation>
    <location>
        <position position="771"/>
    </location>
</feature>